<proteinExistence type="inferred from homology"/>
<protein>
    <recommendedName>
        <fullName evidence="1">ATP synthase subunit beta</fullName>
        <ecNumber evidence="1">7.1.2.2</ecNumber>
    </recommendedName>
    <alternativeName>
        <fullName evidence="1">ATP synthase F1 sector subunit beta</fullName>
    </alternativeName>
    <alternativeName>
        <fullName evidence="1">F-ATPase subunit beta</fullName>
    </alternativeName>
</protein>
<evidence type="ECO:0000255" key="1">
    <source>
        <dbReference type="HAMAP-Rule" id="MF_01347"/>
    </source>
</evidence>
<gene>
    <name evidence="1" type="primary">atpD</name>
    <name type="ordered locus">amb4139</name>
</gene>
<organism>
    <name type="scientific">Paramagnetospirillum magneticum (strain ATCC 700264 / AMB-1)</name>
    <name type="common">Magnetospirillum magneticum</name>
    <dbReference type="NCBI Taxonomy" id="342108"/>
    <lineage>
        <taxon>Bacteria</taxon>
        <taxon>Pseudomonadati</taxon>
        <taxon>Pseudomonadota</taxon>
        <taxon>Alphaproteobacteria</taxon>
        <taxon>Rhodospirillales</taxon>
        <taxon>Magnetospirillaceae</taxon>
        <taxon>Paramagnetospirillum</taxon>
    </lineage>
</organism>
<comment type="function">
    <text evidence="1">Produces ATP from ADP in the presence of a proton gradient across the membrane. The catalytic sites are hosted primarily by the beta subunits.</text>
</comment>
<comment type="catalytic activity">
    <reaction evidence="1">
        <text>ATP + H2O + 4 H(+)(in) = ADP + phosphate + 5 H(+)(out)</text>
        <dbReference type="Rhea" id="RHEA:57720"/>
        <dbReference type="ChEBI" id="CHEBI:15377"/>
        <dbReference type="ChEBI" id="CHEBI:15378"/>
        <dbReference type="ChEBI" id="CHEBI:30616"/>
        <dbReference type="ChEBI" id="CHEBI:43474"/>
        <dbReference type="ChEBI" id="CHEBI:456216"/>
        <dbReference type="EC" id="7.1.2.2"/>
    </reaction>
</comment>
<comment type="subunit">
    <text evidence="1">F-type ATPases have 2 components, CF(1) - the catalytic core - and CF(0) - the membrane proton channel. CF(1) has five subunits: alpha(3), beta(3), gamma(1), delta(1), epsilon(1). CF(0) has three main subunits: a(1), b(2) and c(9-12). The alpha and beta chains form an alternating ring which encloses part of the gamma chain. CF(1) is attached to CF(0) by a central stalk formed by the gamma and epsilon chains, while a peripheral stalk is formed by the delta and b chains.</text>
</comment>
<comment type="subcellular location">
    <subcellularLocation>
        <location evidence="1">Cell inner membrane</location>
        <topology evidence="1">Peripheral membrane protein</topology>
    </subcellularLocation>
</comment>
<comment type="similarity">
    <text evidence="1">Belongs to the ATPase alpha/beta chains family.</text>
</comment>
<sequence length="474" mass="50655">MANKNVGTITQVLGAVVDVRFDGQLPAILSALHLEHQGKKLVLEVAQHLGESTVRTIAMDSTDGLTRGTEVVDTGAAIQMPVGPETLGRIINVIGEPIDERGPIGNKTTLPIHADAPEFVDQSTETEILVTGIKVIDLLAPYCKGGKIGLCGGAGVGKTVLIMELINNIAKAHGGYSVFAGVGERTREGNDLYHEMIESGVIKLDGPGSKVALVYGQMNEPPGARARVALSGLTVAEYFRDVEGQDVLFFVDNIFRFTQAGSEVSALLGRIPSAVGYQPTLATDMGALQERITSTKKGSITSVQAIYVPADDLTDPAPATSFAHLDATTVLNRQIAELGIYPAVDPLDSTSRVLDPRVVGNDHYQTARDVQRILQTYKSLQDIIAILGMDELSEEDKLVVSRARKIQRFLSQPFHVAEIFTGSPGKLVAIDDTIKGFKAIVAGEYDHLPEAAFYMVGGIDEVIEKAKKMAAEAA</sequence>
<name>ATPB_PARM1</name>
<feature type="chain" id="PRO_0000254294" description="ATP synthase subunit beta">
    <location>
        <begin position="1"/>
        <end position="474"/>
    </location>
</feature>
<feature type="binding site" evidence="1">
    <location>
        <begin position="152"/>
        <end position="159"/>
    </location>
    <ligand>
        <name>ATP</name>
        <dbReference type="ChEBI" id="CHEBI:30616"/>
    </ligand>
</feature>
<reference key="1">
    <citation type="journal article" date="2005" name="DNA Res.">
        <title>Complete genome sequence of the facultative anaerobic magnetotactic bacterium Magnetospirillum sp. strain AMB-1.</title>
        <authorList>
            <person name="Matsunaga T."/>
            <person name="Okamura Y."/>
            <person name="Fukuda Y."/>
            <person name="Wahyudi A.T."/>
            <person name="Murase Y."/>
            <person name="Takeyama H."/>
        </authorList>
    </citation>
    <scope>NUCLEOTIDE SEQUENCE [LARGE SCALE GENOMIC DNA]</scope>
    <source>
        <strain>ATCC 700264 / AMB-1</strain>
    </source>
</reference>
<dbReference type="EC" id="7.1.2.2" evidence="1"/>
<dbReference type="EMBL" id="AP007255">
    <property type="protein sequence ID" value="BAE52943.1"/>
    <property type="molecule type" value="Genomic_DNA"/>
</dbReference>
<dbReference type="RefSeq" id="WP_011386488.1">
    <property type="nucleotide sequence ID" value="NC_007626.1"/>
</dbReference>
<dbReference type="SMR" id="Q2VZN2"/>
<dbReference type="STRING" id="342108.amb4139"/>
<dbReference type="KEGG" id="mag:amb4139"/>
<dbReference type="HOGENOM" id="CLU_022398_0_2_5"/>
<dbReference type="OrthoDB" id="9801639at2"/>
<dbReference type="Proteomes" id="UP000007058">
    <property type="component" value="Chromosome"/>
</dbReference>
<dbReference type="GO" id="GO:0005886">
    <property type="term" value="C:plasma membrane"/>
    <property type="evidence" value="ECO:0007669"/>
    <property type="project" value="UniProtKB-SubCell"/>
</dbReference>
<dbReference type="GO" id="GO:0045259">
    <property type="term" value="C:proton-transporting ATP synthase complex"/>
    <property type="evidence" value="ECO:0007669"/>
    <property type="project" value="UniProtKB-KW"/>
</dbReference>
<dbReference type="GO" id="GO:0005524">
    <property type="term" value="F:ATP binding"/>
    <property type="evidence" value="ECO:0007669"/>
    <property type="project" value="UniProtKB-UniRule"/>
</dbReference>
<dbReference type="GO" id="GO:0016887">
    <property type="term" value="F:ATP hydrolysis activity"/>
    <property type="evidence" value="ECO:0007669"/>
    <property type="project" value="InterPro"/>
</dbReference>
<dbReference type="GO" id="GO:0046933">
    <property type="term" value="F:proton-transporting ATP synthase activity, rotational mechanism"/>
    <property type="evidence" value="ECO:0007669"/>
    <property type="project" value="UniProtKB-UniRule"/>
</dbReference>
<dbReference type="CDD" id="cd18110">
    <property type="entry name" value="ATP-synt_F1_beta_C"/>
    <property type="match status" value="1"/>
</dbReference>
<dbReference type="CDD" id="cd18115">
    <property type="entry name" value="ATP-synt_F1_beta_N"/>
    <property type="match status" value="1"/>
</dbReference>
<dbReference type="CDD" id="cd01133">
    <property type="entry name" value="F1-ATPase_beta_CD"/>
    <property type="match status" value="1"/>
</dbReference>
<dbReference type="FunFam" id="1.10.1140.10:FF:000001">
    <property type="entry name" value="ATP synthase subunit beta"/>
    <property type="match status" value="1"/>
</dbReference>
<dbReference type="FunFam" id="2.40.10.170:FF:000005">
    <property type="entry name" value="ATP synthase subunit beta"/>
    <property type="match status" value="1"/>
</dbReference>
<dbReference type="FunFam" id="3.40.50.300:FF:000026">
    <property type="entry name" value="ATP synthase subunit beta"/>
    <property type="match status" value="1"/>
</dbReference>
<dbReference type="Gene3D" id="2.40.10.170">
    <property type="match status" value="1"/>
</dbReference>
<dbReference type="Gene3D" id="1.10.1140.10">
    <property type="entry name" value="Bovine Mitochondrial F1-atpase, Atp Synthase Beta Chain, Chain D, domain 3"/>
    <property type="match status" value="1"/>
</dbReference>
<dbReference type="Gene3D" id="3.40.50.300">
    <property type="entry name" value="P-loop containing nucleotide triphosphate hydrolases"/>
    <property type="match status" value="1"/>
</dbReference>
<dbReference type="HAMAP" id="MF_01347">
    <property type="entry name" value="ATP_synth_beta_bact"/>
    <property type="match status" value="1"/>
</dbReference>
<dbReference type="InterPro" id="IPR003593">
    <property type="entry name" value="AAA+_ATPase"/>
</dbReference>
<dbReference type="InterPro" id="IPR055190">
    <property type="entry name" value="ATP-synt_VA_C"/>
</dbReference>
<dbReference type="InterPro" id="IPR005722">
    <property type="entry name" value="ATP_synth_F1_bsu"/>
</dbReference>
<dbReference type="InterPro" id="IPR020003">
    <property type="entry name" value="ATPase_a/bsu_AS"/>
</dbReference>
<dbReference type="InterPro" id="IPR050053">
    <property type="entry name" value="ATPase_alpha/beta_chains"/>
</dbReference>
<dbReference type="InterPro" id="IPR004100">
    <property type="entry name" value="ATPase_F1/V1/A1_a/bsu_N"/>
</dbReference>
<dbReference type="InterPro" id="IPR036121">
    <property type="entry name" value="ATPase_F1/V1/A1_a/bsu_N_sf"/>
</dbReference>
<dbReference type="InterPro" id="IPR000194">
    <property type="entry name" value="ATPase_F1/V1/A1_a/bsu_nucl-bd"/>
</dbReference>
<dbReference type="InterPro" id="IPR024034">
    <property type="entry name" value="ATPase_F1/V1_b/a_C"/>
</dbReference>
<dbReference type="InterPro" id="IPR027417">
    <property type="entry name" value="P-loop_NTPase"/>
</dbReference>
<dbReference type="NCBIfam" id="TIGR01039">
    <property type="entry name" value="atpD"/>
    <property type="match status" value="1"/>
</dbReference>
<dbReference type="PANTHER" id="PTHR15184">
    <property type="entry name" value="ATP SYNTHASE"/>
    <property type="match status" value="1"/>
</dbReference>
<dbReference type="PANTHER" id="PTHR15184:SF71">
    <property type="entry name" value="ATP SYNTHASE SUBUNIT BETA, MITOCHONDRIAL"/>
    <property type="match status" value="1"/>
</dbReference>
<dbReference type="Pfam" id="PF00006">
    <property type="entry name" value="ATP-synt_ab"/>
    <property type="match status" value="1"/>
</dbReference>
<dbReference type="Pfam" id="PF02874">
    <property type="entry name" value="ATP-synt_ab_N"/>
    <property type="match status" value="1"/>
</dbReference>
<dbReference type="Pfam" id="PF22919">
    <property type="entry name" value="ATP-synt_VA_C"/>
    <property type="match status" value="1"/>
</dbReference>
<dbReference type="PIRSF" id="PIRSF039072">
    <property type="entry name" value="ATPase_subunit_beta"/>
    <property type="match status" value="1"/>
</dbReference>
<dbReference type="SMART" id="SM00382">
    <property type="entry name" value="AAA"/>
    <property type="match status" value="1"/>
</dbReference>
<dbReference type="SUPFAM" id="SSF47917">
    <property type="entry name" value="C-terminal domain of alpha and beta subunits of F1 ATP synthase"/>
    <property type="match status" value="1"/>
</dbReference>
<dbReference type="SUPFAM" id="SSF50615">
    <property type="entry name" value="N-terminal domain of alpha and beta subunits of F1 ATP synthase"/>
    <property type="match status" value="1"/>
</dbReference>
<dbReference type="SUPFAM" id="SSF52540">
    <property type="entry name" value="P-loop containing nucleoside triphosphate hydrolases"/>
    <property type="match status" value="1"/>
</dbReference>
<dbReference type="PROSITE" id="PS00152">
    <property type="entry name" value="ATPASE_ALPHA_BETA"/>
    <property type="match status" value="1"/>
</dbReference>
<keyword id="KW-0066">ATP synthesis</keyword>
<keyword id="KW-0067">ATP-binding</keyword>
<keyword id="KW-0997">Cell inner membrane</keyword>
<keyword id="KW-1003">Cell membrane</keyword>
<keyword id="KW-0139">CF(1)</keyword>
<keyword id="KW-0375">Hydrogen ion transport</keyword>
<keyword id="KW-0406">Ion transport</keyword>
<keyword id="KW-0472">Membrane</keyword>
<keyword id="KW-0547">Nucleotide-binding</keyword>
<keyword id="KW-1278">Translocase</keyword>
<keyword id="KW-0813">Transport</keyword>
<accession>Q2VZN2</accession>